<accession>P69430</accession>
<accession>O65938</accession>
<accession>P27856</accession>
<organism>
    <name type="scientific">Escherichia coli O157:H7</name>
    <dbReference type="NCBI Taxonomy" id="83334"/>
    <lineage>
        <taxon>Bacteria</taxon>
        <taxon>Pseudomonadati</taxon>
        <taxon>Pseudomonadota</taxon>
        <taxon>Gammaproteobacteria</taxon>
        <taxon>Enterobacterales</taxon>
        <taxon>Enterobacteriaceae</taxon>
        <taxon>Escherichia</taxon>
    </lineage>
</organism>
<comment type="function">
    <text evidence="1">Part of the twin-arginine translocation (Tat) system that transports large folded proteins containing a characteristic twin-arginine motif in their signal peptide across membranes. TatA could form the protein-conducting channel of the Tat system.</text>
</comment>
<comment type="subunit">
    <text evidence="1">The Tat system comprises two distinct complexes: a TatABC complex, containing multiple copies of TatA, TatB and TatC subunits, and a separate TatA complex, containing only TatA subunits. Substrates initially bind to the TatABC complex, which probably triggers association of the separate TatA complex to form the active translocon.</text>
</comment>
<comment type="subcellular location">
    <subcellularLocation>
        <location evidence="1">Cell inner membrane</location>
        <topology evidence="1">Single-pass membrane protein</topology>
    </subcellularLocation>
</comment>
<comment type="similarity">
    <text evidence="1">Belongs to the TatA/E family.</text>
</comment>
<comment type="sequence caution" evidence="3">
    <conflict type="erroneous initiation">
        <sequence resource="EMBL-CDS" id="AAG59032"/>
    </conflict>
</comment>
<sequence>MGGISIWQLLIIAVIVVLLFGTKKLGSIGSDLGASIKGFKKAMSDDEPKQDKTSQDADFTAKTIADKQADTNQEQAKTEDAKRHDKEQV</sequence>
<feature type="chain" id="PRO_0000097936" description="Sec-independent protein translocase protein TatA">
    <location>
        <begin position="1"/>
        <end position="89"/>
    </location>
</feature>
<feature type="transmembrane region" description="Helical" evidence="1">
    <location>
        <begin position="1"/>
        <end position="21"/>
    </location>
</feature>
<feature type="region of interest" description="Disordered" evidence="2">
    <location>
        <begin position="65"/>
        <end position="89"/>
    </location>
</feature>
<feature type="compositionally biased region" description="Basic and acidic residues" evidence="2">
    <location>
        <begin position="76"/>
        <end position="89"/>
    </location>
</feature>
<keyword id="KW-0997">Cell inner membrane</keyword>
<keyword id="KW-1003">Cell membrane</keyword>
<keyword id="KW-0472">Membrane</keyword>
<keyword id="KW-0653">Protein transport</keyword>
<keyword id="KW-1185">Reference proteome</keyword>
<keyword id="KW-0811">Translocation</keyword>
<keyword id="KW-0812">Transmembrane</keyword>
<keyword id="KW-1133">Transmembrane helix</keyword>
<keyword id="KW-0813">Transport</keyword>
<name>TATA_ECO57</name>
<evidence type="ECO:0000255" key="1">
    <source>
        <dbReference type="HAMAP-Rule" id="MF_00236"/>
    </source>
</evidence>
<evidence type="ECO:0000256" key="2">
    <source>
        <dbReference type="SAM" id="MobiDB-lite"/>
    </source>
</evidence>
<evidence type="ECO:0000305" key="3"/>
<protein>
    <recommendedName>
        <fullName evidence="1">Sec-independent protein translocase protein TatA</fullName>
    </recommendedName>
</protein>
<reference key="1">
    <citation type="journal article" date="2001" name="Nature">
        <title>Genome sequence of enterohaemorrhagic Escherichia coli O157:H7.</title>
        <authorList>
            <person name="Perna N.T."/>
            <person name="Plunkett G. III"/>
            <person name="Burland V."/>
            <person name="Mau B."/>
            <person name="Glasner J.D."/>
            <person name="Rose D.J."/>
            <person name="Mayhew G.F."/>
            <person name="Evans P.S."/>
            <person name="Gregor J."/>
            <person name="Kirkpatrick H.A."/>
            <person name="Posfai G."/>
            <person name="Hackett J."/>
            <person name="Klink S."/>
            <person name="Boutin A."/>
            <person name="Shao Y."/>
            <person name="Miller L."/>
            <person name="Grotbeck E.J."/>
            <person name="Davis N.W."/>
            <person name="Lim A."/>
            <person name="Dimalanta E.T."/>
            <person name="Potamousis K."/>
            <person name="Apodaca J."/>
            <person name="Anantharaman T.S."/>
            <person name="Lin J."/>
            <person name="Yen G."/>
            <person name="Schwartz D.C."/>
            <person name="Welch R.A."/>
            <person name="Blattner F.R."/>
        </authorList>
    </citation>
    <scope>NUCLEOTIDE SEQUENCE [LARGE SCALE GENOMIC DNA]</scope>
    <source>
        <strain>O157:H7 / EDL933 / ATCC 700927 / EHEC</strain>
    </source>
</reference>
<reference key="2">
    <citation type="journal article" date="2001" name="DNA Res.">
        <title>Complete genome sequence of enterohemorrhagic Escherichia coli O157:H7 and genomic comparison with a laboratory strain K-12.</title>
        <authorList>
            <person name="Hayashi T."/>
            <person name="Makino K."/>
            <person name="Ohnishi M."/>
            <person name="Kurokawa K."/>
            <person name="Ishii K."/>
            <person name="Yokoyama K."/>
            <person name="Han C.-G."/>
            <person name="Ohtsubo E."/>
            <person name="Nakayama K."/>
            <person name="Murata T."/>
            <person name="Tanaka M."/>
            <person name="Tobe T."/>
            <person name="Iida T."/>
            <person name="Takami H."/>
            <person name="Honda T."/>
            <person name="Sasakawa C."/>
            <person name="Ogasawara N."/>
            <person name="Yasunaga T."/>
            <person name="Kuhara S."/>
            <person name="Shiba T."/>
            <person name="Hattori M."/>
            <person name="Shinagawa H."/>
        </authorList>
    </citation>
    <scope>NUCLEOTIDE SEQUENCE [LARGE SCALE GENOMIC DNA]</scope>
    <source>
        <strain>O157:H7 / Sakai / RIMD 0509952 / EHEC</strain>
    </source>
</reference>
<dbReference type="EMBL" id="AE005174">
    <property type="protein sequence ID" value="AAG59032.1"/>
    <property type="status" value="ALT_INIT"/>
    <property type="molecule type" value="Genomic_DNA"/>
</dbReference>
<dbReference type="EMBL" id="BA000007">
    <property type="protein sequence ID" value="BAB38189.1"/>
    <property type="molecule type" value="Genomic_DNA"/>
</dbReference>
<dbReference type="PIR" id="F91224">
    <property type="entry name" value="F91224"/>
</dbReference>
<dbReference type="RefSeq" id="NP_312793.1">
    <property type="nucleotide sequence ID" value="NC_002695.1"/>
</dbReference>
<dbReference type="RefSeq" id="WP_001295260.1">
    <property type="nucleotide sequence ID" value="NZ_VOAI01000017.1"/>
</dbReference>
<dbReference type="BMRB" id="P69430"/>
<dbReference type="SMR" id="P69430"/>
<dbReference type="STRING" id="155864.Z5358"/>
<dbReference type="GeneID" id="915138"/>
<dbReference type="GeneID" id="93778099"/>
<dbReference type="KEGG" id="ece:Z5358"/>
<dbReference type="KEGG" id="ecs:ECs_4766"/>
<dbReference type="PATRIC" id="fig|386585.9.peg.4975"/>
<dbReference type="eggNOG" id="COG1826">
    <property type="taxonomic scope" value="Bacteria"/>
</dbReference>
<dbReference type="HOGENOM" id="CLU_086034_5_1_6"/>
<dbReference type="OMA" id="KAMGDDQ"/>
<dbReference type="Proteomes" id="UP000000558">
    <property type="component" value="Chromosome"/>
</dbReference>
<dbReference type="Proteomes" id="UP000002519">
    <property type="component" value="Chromosome"/>
</dbReference>
<dbReference type="GO" id="GO:0033281">
    <property type="term" value="C:TAT protein transport complex"/>
    <property type="evidence" value="ECO:0007669"/>
    <property type="project" value="UniProtKB-UniRule"/>
</dbReference>
<dbReference type="GO" id="GO:0008320">
    <property type="term" value="F:protein transmembrane transporter activity"/>
    <property type="evidence" value="ECO:0007669"/>
    <property type="project" value="UniProtKB-UniRule"/>
</dbReference>
<dbReference type="GO" id="GO:0043953">
    <property type="term" value="P:protein transport by the Tat complex"/>
    <property type="evidence" value="ECO:0007669"/>
    <property type="project" value="UniProtKB-UniRule"/>
</dbReference>
<dbReference type="FunFam" id="1.20.5.3310:FF:000001">
    <property type="entry name" value="Probable Sec-independent protein translocase protein TatE"/>
    <property type="match status" value="1"/>
</dbReference>
<dbReference type="Gene3D" id="1.20.5.3310">
    <property type="match status" value="1"/>
</dbReference>
<dbReference type="HAMAP" id="MF_00236">
    <property type="entry name" value="TatA_E"/>
    <property type="match status" value="1"/>
</dbReference>
<dbReference type="InterPro" id="IPR003369">
    <property type="entry name" value="TatA/B/E"/>
</dbReference>
<dbReference type="InterPro" id="IPR006312">
    <property type="entry name" value="TatA/E"/>
</dbReference>
<dbReference type="NCBIfam" id="NF002922">
    <property type="entry name" value="PRK03554.1"/>
    <property type="match status" value="1"/>
</dbReference>
<dbReference type="NCBIfam" id="TIGR01411">
    <property type="entry name" value="tatAE"/>
    <property type="match status" value="1"/>
</dbReference>
<dbReference type="PANTHER" id="PTHR42982">
    <property type="entry name" value="SEC-INDEPENDENT PROTEIN TRANSLOCASE PROTEIN TATA"/>
    <property type="match status" value="1"/>
</dbReference>
<dbReference type="PANTHER" id="PTHR42982:SF1">
    <property type="entry name" value="SEC-INDEPENDENT PROTEIN TRANSLOCASE PROTEIN TATA"/>
    <property type="match status" value="1"/>
</dbReference>
<dbReference type="Pfam" id="PF02416">
    <property type="entry name" value="TatA_B_E"/>
    <property type="match status" value="1"/>
</dbReference>
<proteinExistence type="inferred from homology"/>
<gene>
    <name evidence="1" type="primary">tatA</name>
    <name type="synonym">mttA1</name>
    <name type="ordered locus">Z5358</name>
    <name type="ordered locus">ECs4766</name>
</gene>